<accession>Q96MF0</accession>
<accession>B2RPC9</accession>
<organism>
    <name type="scientific">Homo sapiens</name>
    <name type="common">Human</name>
    <dbReference type="NCBI Taxonomy" id="9606"/>
    <lineage>
        <taxon>Eukaryota</taxon>
        <taxon>Metazoa</taxon>
        <taxon>Chordata</taxon>
        <taxon>Craniata</taxon>
        <taxon>Vertebrata</taxon>
        <taxon>Euteleostomi</taxon>
        <taxon>Mammalia</taxon>
        <taxon>Eutheria</taxon>
        <taxon>Euarchontoglires</taxon>
        <taxon>Primates</taxon>
        <taxon>Haplorrhini</taxon>
        <taxon>Catarrhini</taxon>
        <taxon>Hominidae</taxon>
        <taxon>Homo</taxon>
    </lineage>
</organism>
<comment type="caution">
    <text evidence="1">Product of a dubious gene prediction.</text>
</comment>
<dbReference type="EMBL" id="AK057017">
    <property type="status" value="NOT_ANNOTATED_CDS"/>
    <property type="molecule type" value="mRNA"/>
</dbReference>
<dbReference type="EMBL" id="AC123768">
    <property type="status" value="NOT_ANNOTATED_CDS"/>
    <property type="molecule type" value="Genomic_DNA"/>
</dbReference>
<dbReference type="EMBL" id="BC137370">
    <property type="protein sequence ID" value="AAI37371.1"/>
    <property type="molecule type" value="mRNA"/>
</dbReference>
<dbReference type="EMBL" id="BC137374">
    <property type="protein sequence ID" value="AAI37375.1"/>
    <property type="molecule type" value="mRNA"/>
</dbReference>
<dbReference type="BioMuta" id="-"/>
<dbReference type="DMDM" id="325511369"/>
<dbReference type="neXtProt" id="NX_Q96MF0"/>
<dbReference type="InParanoid" id="Q96MF0"/>
<dbReference type="PAN-GO" id="Q96MF0">
    <property type="GO annotations" value="0 GO annotations based on evolutionary models"/>
</dbReference>
<dbReference type="Pharos" id="Q96MF0">
    <property type="development level" value="Tdark"/>
</dbReference>
<dbReference type="Proteomes" id="UP000005640">
    <property type="component" value="Unplaced"/>
</dbReference>
<dbReference type="RNAct" id="Q96MF0">
    <property type="molecule type" value="protein"/>
</dbReference>
<reference key="1">
    <citation type="journal article" date="2004" name="Nat. Genet.">
        <title>Complete sequencing and characterization of 21,243 full-length human cDNAs.</title>
        <authorList>
            <person name="Ota T."/>
            <person name="Suzuki Y."/>
            <person name="Nishikawa T."/>
            <person name="Otsuki T."/>
            <person name="Sugiyama T."/>
            <person name="Irie R."/>
            <person name="Wakamatsu A."/>
            <person name="Hayashi K."/>
            <person name="Sato H."/>
            <person name="Nagai K."/>
            <person name="Kimura K."/>
            <person name="Makita H."/>
            <person name="Sekine M."/>
            <person name="Obayashi M."/>
            <person name="Nishi T."/>
            <person name="Shibahara T."/>
            <person name="Tanaka T."/>
            <person name="Ishii S."/>
            <person name="Yamamoto J."/>
            <person name="Saito K."/>
            <person name="Kawai Y."/>
            <person name="Isono Y."/>
            <person name="Nakamura Y."/>
            <person name="Nagahari K."/>
            <person name="Murakami K."/>
            <person name="Yasuda T."/>
            <person name="Iwayanagi T."/>
            <person name="Wagatsuma M."/>
            <person name="Shiratori A."/>
            <person name="Sudo H."/>
            <person name="Hosoiri T."/>
            <person name="Kaku Y."/>
            <person name="Kodaira H."/>
            <person name="Kondo H."/>
            <person name="Sugawara M."/>
            <person name="Takahashi M."/>
            <person name="Kanda K."/>
            <person name="Yokoi T."/>
            <person name="Furuya T."/>
            <person name="Kikkawa E."/>
            <person name="Omura Y."/>
            <person name="Abe K."/>
            <person name="Kamihara K."/>
            <person name="Katsuta N."/>
            <person name="Sato K."/>
            <person name="Tanikawa M."/>
            <person name="Yamazaki M."/>
            <person name="Ninomiya K."/>
            <person name="Ishibashi T."/>
            <person name="Yamashita H."/>
            <person name="Murakawa K."/>
            <person name="Fujimori K."/>
            <person name="Tanai H."/>
            <person name="Kimata M."/>
            <person name="Watanabe M."/>
            <person name="Hiraoka S."/>
            <person name="Chiba Y."/>
            <person name="Ishida S."/>
            <person name="Ono Y."/>
            <person name="Takiguchi S."/>
            <person name="Watanabe S."/>
            <person name="Yosida M."/>
            <person name="Hotuta T."/>
            <person name="Kusano J."/>
            <person name="Kanehori K."/>
            <person name="Takahashi-Fujii A."/>
            <person name="Hara H."/>
            <person name="Tanase T.-O."/>
            <person name="Nomura Y."/>
            <person name="Togiya S."/>
            <person name="Komai F."/>
            <person name="Hara R."/>
            <person name="Takeuchi K."/>
            <person name="Arita M."/>
            <person name="Imose N."/>
            <person name="Musashino K."/>
            <person name="Yuuki H."/>
            <person name="Oshima A."/>
            <person name="Sasaki N."/>
            <person name="Aotsuka S."/>
            <person name="Yoshikawa Y."/>
            <person name="Matsunawa H."/>
            <person name="Ichihara T."/>
            <person name="Shiohata N."/>
            <person name="Sano S."/>
            <person name="Moriya S."/>
            <person name="Momiyama H."/>
            <person name="Satoh N."/>
            <person name="Takami S."/>
            <person name="Terashima Y."/>
            <person name="Suzuki O."/>
            <person name="Nakagawa S."/>
            <person name="Senoh A."/>
            <person name="Mizoguchi H."/>
            <person name="Goto Y."/>
            <person name="Shimizu F."/>
            <person name="Wakebe H."/>
            <person name="Hishigaki H."/>
            <person name="Watanabe T."/>
            <person name="Sugiyama A."/>
            <person name="Takemoto M."/>
            <person name="Kawakami B."/>
            <person name="Yamazaki M."/>
            <person name="Watanabe K."/>
            <person name="Kumagai A."/>
            <person name="Itakura S."/>
            <person name="Fukuzumi Y."/>
            <person name="Fujimori Y."/>
            <person name="Komiyama M."/>
            <person name="Tashiro H."/>
            <person name="Tanigami A."/>
            <person name="Fujiwara T."/>
            <person name="Ono T."/>
            <person name="Yamada K."/>
            <person name="Fujii Y."/>
            <person name="Ozaki K."/>
            <person name="Hirao M."/>
            <person name="Ohmori Y."/>
            <person name="Kawabata A."/>
            <person name="Hikiji T."/>
            <person name="Kobatake N."/>
            <person name="Inagaki H."/>
            <person name="Ikema Y."/>
            <person name="Okamoto S."/>
            <person name="Okitani R."/>
            <person name="Kawakami T."/>
            <person name="Noguchi S."/>
            <person name="Itoh T."/>
            <person name="Shigeta K."/>
            <person name="Senba T."/>
            <person name="Matsumura K."/>
            <person name="Nakajima Y."/>
            <person name="Mizuno T."/>
            <person name="Morinaga M."/>
            <person name="Sasaki M."/>
            <person name="Togashi T."/>
            <person name="Oyama M."/>
            <person name="Hata H."/>
            <person name="Watanabe M."/>
            <person name="Komatsu T."/>
            <person name="Mizushima-Sugano J."/>
            <person name="Satoh T."/>
            <person name="Shirai Y."/>
            <person name="Takahashi Y."/>
            <person name="Nakagawa K."/>
            <person name="Okumura K."/>
            <person name="Nagase T."/>
            <person name="Nomura N."/>
            <person name="Kikuchi H."/>
            <person name="Masuho Y."/>
            <person name="Yamashita R."/>
            <person name="Nakai K."/>
            <person name="Yada T."/>
            <person name="Nakamura Y."/>
            <person name="Ohara O."/>
            <person name="Isogai T."/>
            <person name="Sugano S."/>
        </authorList>
    </citation>
    <scope>NUCLEOTIDE SEQUENCE [LARGE SCALE MRNA]</scope>
</reference>
<reference key="2">
    <citation type="journal article" date="2006" name="Nature">
        <title>Analysis of the DNA sequence and duplication history of human chromosome 15.</title>
        <authorList>
            <person name="Zody M.C."/>
            <person name="Garber M."/>
            <person name="Sharpe T."/>
            <person name="Young S.K."/>
            <person name="Rowen L."/>
            <person name="O'Neill K."/>
            <person name="Whittaker C.A."/>
            <person name="Kamal M."/>
            <person name="Chang J.L."/>
            <person name="Cuomo C.A."/>
            <person name="Dewar K."/>
            <person name="FitzGerald M.G."/>
            <person name="Kodira C.D."/>
            <person name="Madan A."/>
            <person name="Qin S."/>
            <person name="Yang X."/>
            <person name="Abbasi N."/>
            <person name="Abouelleil A."/>
            <person name="Arachchi H.M."/>
            <person name="Baradarani L."/>
            <person name="Birditt B."/>
            <person name="Bloom S."/>
            <person name="Bloom T."/>
            <person name="Borowsky M.L."/>
            <person name="Burke J."/>
            <person name="Butler J."/>
            <person name="Cook A."/>
            <person name="DeArellano K."/>
            <person name="DeCaprio D."/>
            <person name="Dorris L. III"/>
            <person name="Dors M."/>
            <person name="Eichler E.E."/>
            <person name="Engels R."/>
            <person name="Fahey J."/>
            <person name="Fleetwood P."/>
            <person name="Friedman C."/>
            <person name="Gearin G."/>
            <person name="Hall J.L."/>
            <person name="Hensley G."/>
            <person name="Johnson E."/>
            <person name="Jones C."/>
            <person name="Kamat A."/>
            <person name="Kaur A."/>
            <person name="Locke D.P."/>
            <person name="Madan A."/>
            <person name="Munson G."/>
            <person name="Jaffe D.B."/>
            <person name="Lui A."/>
            <person name="Macdonald P."/>
            <person name="Mauceli E."/>
            <person name="Naylor J.W."/>
            <person name="Nesbitt R."/>
            <person name="Nicol R."/>
            <person name="O'Leary S.B."/>
            <person name="Ratcliffe A."/>
            <person name="Rounsley S."/>
            <person name="She X."/>
            <person name="Sneddon K.M.B."/>
            <person name="Stewart S."/>
            <person name="Sougnez C."/>
            <person name="Stone S.M."/>
            <person name="Topham K."/>
            <person name="Vincent D."/>
            <person name="Wang S."/>
            <person name="Zimmer A.R."/>
            <person name="Birren B.W."/>
            <person name="Hood L."/>
            <person name="Lander E.S."/>
            <person name="Nusbaum C."/>
        </authorList>
    </citation>
    <scope>NUCLEOTIDE SEQUENCE [LARGE SCALE GENOMIC DNA]</scope>
</reference>
<reference key="3">
    <citation type="journal article" date="2004" name="Genome Res.">
        <title>The status, quality, and expansion of the NIH full-length cDNA project: the Mammalian Gene Collection (MGC).</title>
        <authorList>
            <consortium name="The MGC Project Team"/>
        </authorList>
    </citation>
    <scope>NUCLEOTIDE SEQUENCE [LARGE SCALE MRNA]</scope>
</reference>
<feature type="chain" id="PRO_0000263720" description="Putative uncharacterized protein LOC100506887">
    <location>
        <begin position="1"/>
        <end position="132"/>
    </location>
</feature>
<feature type="sequence conflict" description="In Ref. 1; AK057017 and 3; AAI37371/AAI37375." evidence="1" ref="1 3">
    <original>S</original>
    <variation>P</variation>
    <location>
        <position position="90"/>
    </location>
</feature>
<feature type="sequence conflict" description="In Ref. 1; AK057017 and 3; AAI37371/AAI37375." evidence="1" ref="1 3">
    <original>R</original>
    <variation>G</variation>
    <location>
        <position position="129"/>
    </location>
</feature>
<proteinExistence type="uncertain"/>
<keyword id="KW-1185">Reference proteome</keyword>
<protein>
    <recommendedName>
        <fullName>Putative uncharacterized protein LOC100506887</fullName>
    </recommendedName>
</protein>
<name>YO028_HUMAN</name>
<evidence type="ECO:0000305" key="1"/>
<sequence>MPFKTKYPNGFHFAYLPTGSTQFRSLLQGQDSASQGVCPCRLCGAVPVRDQARIQSRRITLANCQGQPSALRQVNELANSAQIESFLCFSQLPNAVCFGGHLSCEFRECGYCNINPHHSKQLKLNSVTREES</sequence>